<gene>
    <name evidence="1" type="primary">ispG</name>
    <name type="ordered locus">NIS_0337</name>
</gene>
<protein>
    <recommendedName>
        <fullName evidence="1">4-hydroxy-3-methylbut-2-en-1-yl diphosphate synthase (flavodoxin)</fullName>
        <ecNumber evidence="1">1.17.7.3</ecNumber>
    </recommendedName>
    <alternativeName>
        <fullName evidence="1">1-hydroxy-2-methyl-2-(E)-butenyl 4-diphosphate synthase</fullName>
    </alternativeName>
</protein>
<proteinExistence type="inferred from homology"/>
<sequence length="352" mass="38203">MKRYPTKKIFVGDVAVGGDAPISVQSMTFSKTADVEATVEQINRLHFAGADIVRVAVPEEEDAKALKEIKKRTSLPLVADIHFNYRLALIAAEVVDCIRINPGNIGSKERIKEVVKACKERNIPIRIGVNAGSLEKEIEAKYGATSEAMVQSALYHIKLLEDLDFTDIKVSMKASDVERTVEAYRKLRPLVPYPFHLGVTEAGTVFHATIKSAIGIGALLLEGIGDTIRVSITGELEKEIEVGRAIIKDAGRASEGLNIISCPTCGRIEADLVKAVAEVEEKTKHIKTPLNVSVMGCVVNAIGEAKHADVAIAYGKGSGLIMVKGEVVAKLPENKLVDRFLQEVQKLAKEKE</sequence>
<comment type="function">
    <text evidence="1">Converts 2C-methyl-D-erythritol 2,4-cyclodiphosphate (ME-2,4cPP) into 1-hydroxy-2-methyl-2-(E)-butenyl 4-diphosphate.</text>
</comment>
<comment type="catalytic activity">
    <reaction evidence="1">
        <text>(2E)-4-hydroxy-3-methylbut-2-enyl diphosphate + oxidized [flavodoxin] + H2O + 2 H(+) = 2-C-methyl-D-erythritol 2,4-cyclic diphosphate + reduced [flavodoxin]</text>
        <dbReference type="Rhea" id="RHEA:43604"/>
        <dbReference type="Rhea" id="RHEA-COMP:10622"/>
        <dbReference type="Rhea" id="RHEA-COMP:10623"/>
        <dbReference type="ChEBI" id="CHEBI:15377"/>
        <dbReference type="ChEBI" id="CHEBI:15378"/>
        <dbReference type="ChEBI" id="CHEBI:57618"/>
        <dbReference type="ChEBI" id="CHEBI:58210"/>
        <dbReference type="ChEBI" id="CHEBI:58483"/>
        <dbReference type="ChEBI" id="CHEBI:128753"/>
        <dbReference type="EC" id="1.17.7.3"/>
    </reaction>
</comment>
<comment type="cofactor">
    <cofactor evidence="1">
        <name>[4Fe-4S] cluster</name>
        <dbReference type="ChEBI" id="CHEBI:49883"/>
    </cofactor>
    <text evidence="1">Binds 1 [4Fe-4S] cluster.</text>
</comment>
<comment type="pathway">
    <text evidence="1">Isoprenoid biosynthesis; isopentenyl diphosphate biosynthesis via DXP pathway; isopentenyl diphosphate from 1-deoxy-D-xylulose 5-phosphate: step 5/6.</text>
</comment>
<comment type="similarity">
    <text evidence="1">Belongs to the IspG family.</text>
</comment>
<organism>
    <name type="scientific">Nitratiruptor sp. (strain SB155-2)</name>
    <dbReference type="NCBI Taxonomy" id="387092"/>
    <lineage>
        <taxon>Bacteria</taxon>
        <taxon>Pseudomonadati</taxon>
        <taxon>Campylobacterota</taxon>
        <taxon>Epsilonproteobacteria</taxon>
        <taxon>Nautiliales</taxon>
        <taxon>Nitratiruptoraceae</taxon>
        <taxon>Nitratiruptor</taxon>
    </lineage>
</organism>
<evidence type="ECO:0000255" key="1">
    <source>
        <dbReference type="HAMAP-Rule" id="MF_00159"/>
    </source>
</evidence>
<reference key="1">
    <citation type="journal article" date="2007" name="Proc. Natl. Acad. Sci. U.S.A.">
        <title>Deep-sea vent epsilon-proteobacterial genomes provide insights into emergence of pathogens.</title>
        <authorList>
            <person name="Nakagawa S."/>
            <person name="Takaki Y."/>
            <person name="Shimamura S."/>
            <person name="Reysenbach A.-L."/>
            <person name="Takai K."/>
            <person name="Horikoshi K."/>
        </authorList>
    </citation>
    <scope>NUCLEOTIDE SEQUENCE [LARGE SCALE GENOMIC DNA]</scope>
    <source>
        <strain>SB155-2</strain>
    </source>
</reference>
<dbReference type="EC" id="1.17.7.3" evidence="1"/>
<dbReference type="EMBL" id="AP009178">
    <property type="protein sequence ID" value="BAF69451.1"/>
    <property type="molecule type" value="Genomic_DNA"/>
</dbReference>
<dbReference type="SMR" id="A6Q1U2"/>
<dbReference type="FunCoup" id="A6Q1U2">
    <property type="interactions" value="285"/>
</dbReference>
<dbReference type="STRING" id="387092.NIS_0337"/>
<dbReference type="KEGG" id="nis:NIS_0337"/>
<dbReference type="eggNOG" id="COG0821">
    <property type="taxonomic scope" value="Bacteria"/>
</dbReference>
<dbReference type="HOGENOM" id="CLU_042258_0_0_7"/>
<dbReference type="InParanoid" id="A6Q1U2"/>
<dbReference type="OrthoDB" id="9803214at2"/>
<dbReference type="UniPathway" id="UPA00056">
    <property type="reaction ID" value="UER00096"/>
</dbReference>
<dbReference type="Proteomes" id="UP000001118">
    <property type="component" value="Chromosome"/>
</dbReference>
<dbReference type="GO" id="GO:0051539">
    <property type="term" value="F:4 iron, 4 sulfur cluster binding"/>
    <property type="evidence" value="ECO:0007669"/>
    <property type="project" value="UniProtKB-UniRule"/>
</dbReference>
<dbReference type="GO" id="GO:0046429">
    <property type="term" value="F:4-hydroxy-3-methylbut-2-en-1-yl diphosphate synthase activity (ferredoxin)"/>
    <property type="evidence" value="ECO:0007669"/>
    <property type="project" value="UniProtKB-UniRule"/>
</dbReference>
<dbReference type="GO" id="GO:0141197">
    <property type="term" value="F:4-hydroxy-3-methylbut-2-enyl-diphosphate synthase activity (flavodoxin)"/>
    <property type="evidence" value="ECO:0007669"/>
    <property type="project" value="UniProtKB-EC"/>
</dbReference>
<dbReference type="GO" id="GO:0005506">
    <property type="term" value="F:iron ion binding"/>
    <property type="evidence" value="ECO:0007669"/>
    <property type="project" value="InterPro"/>
</dbReference>
<dbReference type="GO" id="GO:0019288">
    <property type="term" value="P:isopentenyl diphosphate biosynthetic process, methylerythritol 4-phosphate pathway"/>
    <property type="evidence" value="ECO:0007669"/>
    <property type="project" value="UniProtKB-UniRule"/>
</dbReference>
<dbReference type="GO" id="GO:0016114">
    <property type="term" value="P:terpenoid biosynthetic process"/>
    <property type="evidence" value="ECO:0007669"/>
    <property type="project" value="InterPro"/>
</dbReference>
<dbReference type="FunFam" id="3.20.20.20:FF:000001">
    <property type="entry name" value="4-hydroxy-3-methylbut-2-en-1-yl diphosphate synthase (flavodoxin)"/>
    <property type="match status" value="1"/>
</dbReference>
<dbReference type="Gene3D" id="3.20.20.20">
    <property type="entry name" value="Dihydropteroate synthase-like"/>
    <property type="match status" value="1"/>
</dbReference>
<dbReference type="Gene3D" id="3.30.413.10">
    <property type="entry name" value="Sulfite Reductase Hemoprotein, domain 1"/>
    <property type="match status" value="1"/>
</dbReference>
<dbReference type="HAMAP" id="MF_00159">
    <property type="entry name" value="IspG"/>
    <property type="match status" value="1"/>
</dbReference>
<dbReference type="InterPro" id="IPR011005">
    <property type="entry name" value="Dihydropteroate_synth-like_sf"/>
</dbReference>
<dbReference type="InterPro" id="IPR016425">
    <property type="entry name" value="IspG_bac"/>
</dbReference>
<dbReference type="InterPro" id="IPR004588">
    <property type="entry name" value="IspG_bac-typ"/>
</dbReference>
<dbReference type="InterPro" id="IPR045854">
    <property type="entry name" value="NO2/SO3_Rdtase_4Fe4S_sf"/>
</dbReference>
<dbReference type="NCBIfam" id="TIGR00612">
    <property type="entry name" value="ispG_gcpE"/>
    <property type="match status" value="1"/>
</dbReference>
<dbReference type="NCBIfam" id="NF001540">
    <property type="entry name" value="PRK00366.1"/>
    <property type="match status" value="1"/>
</dbReference>
<dbReference type="PANTHER" id="PTHR30454">
    <property type="entry name" value="4-HYDROXY-3-METHYLBUT-2-EN-1-YL DIPHOSPHATE SYNTHASE"/>
    <property type="match status" value="1"/>
</dbReference>
<dbReference type="PANTHER" id="PTHR30454:SF0">
    <property type="entry name" value="4-HYDROXY-3-METHYLBUT-2-EN-1-YL DIPHOSPHATE SYNTHASE (FERREDOXIN), CHLOROPLASTIC"/>
    <property type="match status" value="1"/>
</dbReference>
<dbReference type="Pfam" id="PF04551">
    <property type="entry name" value="GcpE"/>
    <property type="match status" value="1"/>
</dbReference>
<dbReference type="PIRSF" id="PIRSF004640">
    <property type="entry name" value="IspG"/>
    <property type="match status" value="1"/>
</dbReference>
<dbReference type="SUPFAM" id="SSF51717">
    <property type="entry name" value="Dihydropteroate synthetase-like"/>
    <property type="match status" value="1"/>
</dbReference>
<dbReference type="SUPFAM" id="SSF56014">
    <property type="entry name" value="Nitrite and sulphite reductase 4Fe-4S domain-like"/>
    <property type="match status" value="1"/>
</dbReference>
<feature type="chain" id="PRO_1000011489" description="4-hydroxy-3-methylbut-2-en-1-yl diphosphate synthase (flavodoxin)">
    <location>
        <begin position="1"/>
        <end position="352"/>
    </location>
</feature>
<feature type="binding site" evidence="1">
    <location>
        <position position="262"/>
    </location>
    <ligand>
        <name>[4Fe-4S] cluster</name>
        <dbReference type="ChEBI" id="CHEBI:49883"/>
    </ligand>
</feature>
<feature type="binding site" evidence="1">
    <location>
        <position position="265"/>
    </location>
    <ligand>
        <name>[4Fe-4S] cluster</name>
        <dbReference type="ChEBI" id="CHEBI:49883"/>
    </ligand>
</feature>
<feature type="binding site" evidence="1">
    <location>
        <position position="297"/>
    </location>
    <ligand>
        <name>[4Fe-4S] cluster</name>
        <dbReference type="ChEBI" id="CHEBI:49883"/>
    </ligand>
</feature>
<feature type="binding site" evidence="1">
    <location>
        <position position="304"/>
    </location>
    <ligand>
        <name>[4Fe-4S] cluster</name>
        <dbReference type="ChEBI" id="CHEBI:49883"/>
    </ligand>
</feature>
<name>ISPG_NITSB</name>
<keyword id="KW-0004">4Fe-4S</keyword>
<keyword id="KW-0408">Iron</keyword>
<keyword id="KW-0411">Iron-sulfur</keyword>
<keyword id="KW-0414">Isoprene biosynthesis</keyword>
<keyword id="KW-0479">Metal-binding</keyword>
<keyword id="KW-0560">Oxidoreductase</keyword>
<keyword id="KW-1185">Reference proteome</keyword>
<accession>A6Q1U2</accession>